<proteinExistence type="evidence at protein level"/>
<organism>
    <name type="scientific">Escherichia coli (strain K12)</name>
    <dbReference type="NCBI Taxonomy" id="83333"/>
    <lineage>
        <taxon>Bacteria</taxon>
        <taxon>Pseudomonadati</taxon>
        <taxon>Pseudomonadota</taxon>
        <taxon>Gammaproteobacteria</taxon>
        <taxon>Enterobacterales</taxon>
        <taxon>Enterobacteriaceae</taxon>
        <taxon>Escherichia</taxon>
    </lineage>
</organism>
<keyword id="KW-0002">3D-structure</keyword>
<keyword id="KW-1015">Disulfide bond</keyword>
<keyword id="KW-0281">Fimbrium</keyword>
<keyword id="KW-1185">Reference proteome</keyword>
<keyword id="KW-0732">Signal</keyword>
<reference key="1">
    <citation type="journal article" date="1987" name="Mol. Gen. Genet.">
        <title>Three fim genes required for the regulation of length and mediation of adhesion of Escherichia coli type 1 fimbriae.</title>
        <authorList>
            <person name="Klemm P."/>
            <person name="Christiansen G."/>
        </authorList>
    </citation>
    <scope>NUCLEOTIDE SEQUENCE [GENOMIC DNA]</scope>
</reference>
<reference key="2">
    <citation type="journal article" date="1995" name="Nucleic Acids Res.">
        <title>Analysis of the Escherichia coli genome VI: DNA sequence of the region from 92.8 through 100 minutes.</title>
        <authorList>
            <person name="Burland V.D."/>
            <person name="Plunkett G. III"/>
            <person name="Sofia H.J."/>
            <person name="Daniels D.L."/>
            <person name="Blattner F.R."/>
        </authorList>
    </citation>
    <scope>NUCLEOTIDE SEQUENCE [LARGE SCALE GENOMIC DNA]</scope>
    <source>
        <strain>K12 / MG1655 / ATCC 47076</strain>
    </source>
</reference>
<reference key="3">
    <citation type="journal article" date="1997" name="Science">
        <title>The complete genome sequence of Escherichia coli K-12.</title>
        <authorList>
            <person name="Blattner F.R."/>
            <person name="Plunkett G. III"/>
            <person name="Bloch C.A."/>
            <person name="Perna N.T."/>
            <person name="Burland V."/>
            <person name="Riley M."/>
            <person name="Collado-Vides J."/>
            <person name="Glasner J.D."/>
            <person name="Rode C.K."/>
            <person name="Mayhew G.F."/>
            <person name="Gregor J."/>
            <person name="Davis N.W."/>
            <person name="Kirkpatrick H.A."/>
            <person name="Goeden M.A."/>
            <person name="Rose D.J."/>
            <person name="Mau B."/>
            <person name="Shao Y."/>
        </authorList>
    </citation>
    <scope>NUCLEOTIDE SEQUENCE [LARGE SCALE GENOMIC DNA]</scope>
    <source>
        <strain>K12 / MG1655 / ATCC 47076</strain>
    </source>
</reference>
<reference key="4">
    <citation type="journal article" date="2006" name="Mol. Syst. Biol.">
        <title>Highly accurate genome sequences of Escherichia coli K-12 strains MG1655 and W3110.</title>
        <authorList>
            <person name="Hayashi K."/>
            <person name="Morooka N."/>
            <person name="Yamamoto Y."/>
            <person name="Fujita K."/>
            <person name="Isono K."/>
            <person name="Choi S."/>
            <person name="Ohtsubo E."/>
            <person name="Baba T."/>
            <person name="Wanner B.L."/>
            <person name="Mori H."/>
            <person name="Horiuchi T."/>
        </authorList>
    </citation>
    <scope>NUCLEOTIDE SEQUENCE [LARGE SCALE GENOMIC DNA]</scope>
    <source>
        <strain>K12 / W3110 / ATCC 27325 / DSM 5911</strain>
    </source>
</reference>
<reference key="5">
    <citation type="journal article" date="1990" name="Mol. Gen. Genet.">
        <title>The fimD gene required for cell surface localization of Escherichia coli type 1 fimbriae.</title>
        <authorList>
            <person name="Klemm P."/>
            <person name="Christiansen G."/>
        </authorList>
    </citation>
    <scope>NUCLEOTIDE SEQUENCE [GENOMIC DNA] OF 1-3</scope>
    <source>
        <strain>K12</strain>
    </source>
</reference>
<gene>
    <name type="primary">fimF</name>
    <name type="ordered locus">b4318</name>
    <name type="ordered locus">JW4281</name>
</gene>
<dbReference type="EMBL" id="X05672">
    <property type="protein sequence ID" value="CAA29154.1"/>
    <property type="molecule type" value="Genomic_DNA"/>
</dbReference>
<dbReference type="EMBL" id="U14003">
    <property type="protein sequence ID" value="AAA97214.1"/>
    <property type="molecule type" value="Genomic_DNA"/>
</dbReference>
<dbReference type="EMBL" id="U00096">
    <property type="protein sequence ID" value="AAC77274.1"/>
    <property type="molecule type" value="Genomic_DNA"/>
</dbReference>
<dbReference type="EMBL" id="AP009048">
    <property type="protein sequence ID" value="BAE78311.1"/>
    <property type="molecule type" value="Genomic_DNA"/>
</dbReference>
<dbReference type="EMBL" id="X51655">
    <property type="protein sequence ID" value="CAA35969.1"/>
    <property type="molecule type" value="Genomic_DNA"/>
</dbReference>
<dbReference type="PIR" id="S56543">
    <property type="entry name" value="S56543"/>
</dbReference>
<dbReference type="RefSeq" id="NP_418738.1">
    <property type="nucleotide sequence ID" value="NC_000913.3"/>
</dbReference>
<dbReference type="RefSeq" id="WP_001244827.1">
    <property type="nucleotide sequence ID" value="NZ_SSUV01000012.1"/>
</dbReference>
<dbReference type="PDB" id="2JMR">
    <property type="method" value="NMR"/>
    <property type="chains" value="A=23-176"/>
</dbReference>
<dbReference type="PDB" id="3BFQ">
    <property type="method" value="X-ray"/>
    <property type="resolution" value="1.34 A"/>
    <property type="chains" value="F=23-37"/>
</dbReference>
<dbReference type="PDB" id="3BFW">
    <property type="method" value="X-ray"/>
    <property type="resolution" value="1.80 A"/>
    <property type="chains" value="B/D=23-37"/>
</dbReference>
<dbReference type="PDB" id="3BWU">
    <property type="method" value="X-ray"/>
    <property type="resolution" value="1.76 A"/>
    <property type="chains" value="F=35-176"/>
</dbReference>
<dbReference type="PDB" id="3JWN">
    <property type="method" value="X-ray"/>
    <property type="resolution" value="2.69 A"/>
    <property type="chains" value="E/F/K/L=23-176"/>
</dbReference>
<dbReference type="PDB" id="4J3O">
    <property type="method" value="X-ray"/>
    <property type="resolution" value="3.80 A"/>
    <property type="chains" value="F=23-176"/>
</dbReference>
<dbReference type="PDB" id="4XOB">
    <property type="method" value="X-ray"/>
    <property type="resolution" value="3.00 A"/>
    <property type="chains" value="B/D/F/H=23-37"/>
</dbReference>
<dbReference type="PDB" id="5IQM">
    <property type="method" value="X-ray"/>
    <property type="resolution" value="1.50 A"/>
    <property type="chains" value="B/F=23-37"/>
</dbReference>
<dbReference type="PDB" id="5IQN">
    <property type="method" value="X-ray"/>
    <property type="resolution" value="1.00 A"/>
    <property type="chains" value="B/F=25-34"/>
</dbReference>
<dbReference type="PDB" id="5IQO">
    <property type="method" value="X-ray"/>
    <property type="resolution" value="1.30 A"/>
    <property type="chains" value="B/D=23-37"/>
</dbReference>
<dbReference type="PDB" id="6E14">
    <property type="method" value="EM"/>
    <property type="resolution" value="4.00 A"/>
    <property type="chains" value="F=21-176"/>
</dbReference>
<dbReference type="PDB" id="6E15">
    <property type="method" value="EM"/>
    <property type="resolution" value="6.20 A"/>
    <property type="chains" value="F=21-176"/>
</dbReference>
<dbReference type="PDB" id="7SZO">
    <property type="method" value="X-ray"/>
    <property type="resolution" value="2.80 A"/>
    <property type="chains" value="E/F/K/L=23-176"/>
</dbReference>
<dbReference type="PDB" id="9BOG">
    <property type="method" value="EM"/>
    <property type="resolution" value="3.99 A"/>
    <property type="chains" value="F=23-176"/>
</dbReference>
<dbReference type="PDBsum" id="2JMR"/>
<dbReference type="PDBsum" id="3BFQ"/>
<dbReference type="PDBsum" id="3BFW"/>
<dbReference type="PDBsum" id="3BWU"/>
<dbReference type="PDBsum" id="3JWN"/>
<dbReference type="PDBsum" id="4J3O"/>
<dbReference type="PDBsum" id="4XOB"/>
<dbReference type="PDBsum" id="5IQM"/>
<dbReference type="PDBsum" id="5IQN"/>
<dbReference type="PDBsum" id="5IQO"/>
<dbReference type="PDBsum" id="6E14"/>
<dbReference type="PDBsum" id="6E15"/>
<dbReference type="PDBsum" id="7SZO"/>
<dbReference type="PDBsum" id="9BOG"/>
<dbReference type="BMRB" id="P08189"/>
<dbReference type="EMDB" id="EMD-44735"/>
<dbReference type="EMDB" id="EMD-8953"/>
<dbReference type="EMDB" id="EMD-8954"/>
<dbReference type="SMR" id="P08189"/>
<dbReference type="BioGRID" id="4262749">
    <property type="interactions" value="4"/>
</dbReference>
<dbReference type="ComplexPortal" id="CPX-2855">
    <property type="entry name" value="Fimbrial Tip Complex FimFGH"/>
</dbReference>
<dbReference type="DIP" id="DIP-9614N"/>
<dbReference type="FunCoup" id="P08189">
    <property type="interactions" value="20"/>
</dbReference>
<dbReference type="IntAct" id="P08189">
    <property type="interactions" value="1"/>
</dbReference>
<dbReference type="MINT" id="P08189"/>
<dbReference type="STRING" id="511145.b4318"/>
<dbReference type="PaxDb" id="511145-b4318"/>
<dbReference type="EnsemblBacteria" id="AAC77274">
    <property type="protein sequence ID" value="AAC77274"/>
    <property type="gene ID" value="b4318"/>
</dbReference>
<dbReference type="GeneID" id="75203001"/>
<dbReference type="GeneID" id="948845"/>
<dbReference type="KEGG" id="ecj:JW4281"/>
<dbReference type="KEGG" id="eco:b4318"/>
<dbReference type="KEGG" id="ecoc:C3026_23325"/>
<dbReference type="PATRIC" id="fig|1411691.4.peg.2374"/>
<dbReference type="EchoBASE" id="EB0309"/>
<dbReference type="eggNOG" id="COG3539">
    <property type="taxonomic scope" value="Bacteria"/>
</dbReference>
<dbReference type="HOGENOM" id="CLU_088965_0_2_6"/>
<dbReference type="InParanoid" id="P08189"/>
<dbReference type="OMA" id="YVRDNAC"/>
<dbReference type="OrthoDB" id="6896277at2"/>
<dbReference type="PhylomeDB" id="P08189"/>
<dbReference type="BioCyc" id="EcoCyc:EG10313-MONOMER"/>
<dbReference type="EvolutionaryTrace" id="P08189"/>
<dbReference type="PRO" id="PR:P08189"/>
<dbReference type="Proteomes" id="UP000000625">
    <property type="component" value="Chromosome"/>
</dbReference>
<dbReference type="GO" id="GO:0009289">
    <property type="term" value="C:pilus"/>
    <property type="evidence" value="ECO:0000318"/>
    <property type="project" value="GO_Central"/>
</dbReference>
<dbReference type="GO" id="GO:0009419">
    <property type="term" value="C:pilus tip"/>
    <property type="evidence" value="ECO:0000353"/>
    <property type="project" value="ComplexPortal"/>
</dbReference>
<dbReference type="GO" id="GO:0007155">
    <property type="term" value="P:cell adhesion"/>
    <property type="evidence" value="ECO:0000315"/>
    <property type="project" value="ComplexPortal"/>
</dbReference>
<dbReference type="GO" id="GO:0043709">
    <property type="term" value="P:cell adhesion involved in single-species biofilm formation"/>
    <property type="evidence" value="ECO:0000318"/>
    <property type="project" value="GO_Central"/>
</dbReference>
<dbReference type="GO" id="GO:0031589">
    <property type="term" value="P:cell-substrate adhesion"/>
    <property type="evidence" value="ECO:0000315"/>
    <property type="project" value="ComplexPortal"/>
</dbReference>
<dbReference type="GO" id="GO:0007638">
    <property type="term" value="P:mechanosensory behavior"/>
    <property type="evidence" value="ECO:0000314"/>
    <property type="project" value="ComplexPortal"/>
</dbReference>
<dbReference type="GO" id="GO:0009297">
    <property type="term" value="P:pilus assembly"/>
    <property type="evidence" value="ECO:0000269"/>
    <property type="project" value="EcoCyc"/>
</dbReference>
<dbReference type="Gene3D" id="2.60.40.1090">
    <property type="entry name" value="Fimbrial-type adhesion domain"/>
    <property type="match status" value="1"/>
</dbReference>
<dbReference type="InterPro" id="IPR000259">
    <property type="entry name" value="Adhesion_dom_fimbrial"/>
</dbReference>
<dbReference type="InterPro" id="IPR036937">
    <property type="entry name" value="Adhesion_dom_fimbrial_sf"/>
</dbReference>
<dbReference type="InterPro" id="IPR008966">
    <property type="entry name" value="Adhesion_dom_sf"/>
</dbReference>
<dbReference type="InterPro" id="IPR050263">
    <property type="entry name" value="Bact_Fimbrial_Adh_Pro"/>
</dbReference>
<dbReference type="PANTHER" id="PTHR33420">
    <property type="entry name" value="FIMBRIAL SUBUNIT ELFA-RELATED"/>
    <property type="match status" value="1"/>
</dbReference>
<dbReference type="PANTHER" id="PTHR33420:SF25">
    <property type="entry name" value="PROTEIN FIMF"/>
    <property type="match status" value="1"/>
</dbReference>
<dbReference type="Pfam" id="PF00419">
    <property type="entry name" value="Fimbrial"/>
    <property type="match status" value="1"/>
</dbReference>
<dbReference type="SUPFAM" id="SSF49401">
    <property type="entry name" value="Bacterial adhesins"/>
    <property type="match status" value="1"/>
</dbReference>
<comment type="function">
    <text>Involved in regulation of length and mediation of adhesion of type 1 fimbriae (but not necessary for the production of fimbriae). Involved in the integration of FimH in the fimbriae.</text>
</comment>
<comment type="subcellular location">
    <subcellularLocation>
        <location>Fimbrium</location>
    </subcellularLocation>
</comment>
<comment type="similarity">
    <text evidence="3">Belongs to the fimbrial protein family.</text>
</comment>
<feature type="signal peptide" evidence="2">
    <location>
        <begin position="1"/>
        <end position="20"/>
    </location>
</feature>
<feature type="chain" id="PRO_0000009207" description="Protein FimF">
    <location>
        <begin position="21"/>
        <end position="176"/>
    </location>
</feature>
<feature type="site" description="Required for stability and transport" evidence="1">
    <location>
        <position position="175"/>
    </location>
</feature>
<feature type="disulfide bond" evidence="3">
    <location>
        <begin position="38"/>
        <end position="78"/>
    </location>
</feature>
<feature type="sequence conflict" description="In Ref. 1; CAA29154." evidence="3" ref="1">
    <original>P</original>
    <variation>S</variation>
    <location>
        <position position="70"/>
    </location>
</feature>
<feature type="sequence conflict" description="In Ref. 1; CAA29154." evidence="3" ref="1">
    <original>S</original>
    <variation>L</variation>
    <location>
        <position position="76"/>
    </location>
</feature>
<feature type="sequence conflict" description="In Ref. 1; CAA29154." evidence="3" ref="1">
    <original>A</original>
    <variation>V</variation>
    <location>
        <position position="81"/>
    </location>
</feature>
<feature type="sequence conflict" description="In Ref. 1; CAA29154." evidence="3" ref="1">
    <original>AVKVGFTGV</original>
    <variation>RRKGWVYWR</variation>
    <location>
        <begin position="84"/>
        <end position="92"/>
    </location>
</feature>
<feature type="sequence conflict" description="In Ref. 1; CAA29154." evidence="3" ref="1">
    <original>V</original>
    <variation>A</variation>
    <location>
        <position position="107"/>
    </location>
</feature>
<feature type="strand" evidence="7">
    <location>
        <begin position="26"/>
        <end position="33"/>
    </location>
</feature>
<feature type="strand" evidence="4">
    <location>
        <begin position="35"/>
        <end position="37"/>
    </location>
</feature>
<feature type="strand" evidence="5">
    <location>
        <begin position="38"/>
        <end position="42"/>
    </location>
</feature>
<feature type="strand" evidence="4">
    <location>
        <begin position="46"/>
        <end position="49"/>
    </location>
</feature>
<feature type="helix" evidence="6">
    <location>
        <begin position="52"/>
        <end position="55"/>
    </location>
</feature>
<feature type="helix" evidence="4">
    <location>
        <begin position="56"/>
        <end position="58"/>
    </location>
</feature>
<feature type="strand" evidence="5">
    <location>
        <begin position="69"/>
        <end position="78"/>
    </location>
</feature>
<feature type="strand" evidence="5">
    <location>
        <begin position="84"/>
        <end position="90"/>
    </location>
</feature>
<feature type="strand" evidence="5">
    <location>
        <begin position="100"/>
        <end position="102"/>
    </location>
</feature>
<feature type="strand" evidence="6">
    <location>
        <begin position="106"/>
        <end position="109"/>
    </location>
</feature>
<feature type="strand" evidence="5">
    <location>
        <begin position="111"/>
        <end position="118"/>
    </location>
</feature>
<feature type="strand" evidence="4">
    <location>
        <begin position="127"/>
        <end position="129"/>
    </location>
</feature>
<feature type="helix" evidence="5">
    <location>
        <begin position="131"/>
        <end position="133"/>
    </location>
</feature>
<feature type="strand" evidence="5">
    <location>
        <begin position="136"/>
        <end position="138"/>
    </location>
</feature>
<feature type="strand" evidence="6">
    <location>
        <begin position="141"/>
        <end position="143"/>
    </location>
</feature>
<feature type="strand" evidence="5">
    <location>
        <begin position="145"/>
        <end position="159"/>
    </location>
</feature>
<feature type="strand" evidence="5">
    <location>
        <begin position="166"/>
        <end position="175"/>
    </location>
</feature>
<accession>P08189</accession>
<accession>Q2M5Z5</accession>
<protein>
    <recommendedName>
        <fullName>Protein FimF</fullName>
    </recommendedName>
</protein>
<name>FIMF_ECOLI</name>
<sequence length="176" mass="18715">MRNKPFYLLCAFLWLAVSHALAADSTITIRGYVRDNGCSVAAESTNFTVDLMENAAKQFNNIGATTPVVPFRILLSPCGNAVSAVKVGFTGVADSHNANLLALENTVSAASGLGIQLLNEQQNQIPLNAPSSALSWTTLTPGKPNTLNFYARLMATQVPVTAGHINATATFTLEYQ</sequence>
<evidence type="ECO:0000250" key="1"/>
<evidence type="ECO:0000255" key="2"/>
<evidence type="ECO:0000305" key="3"/>
<evidence type="ECO:0007829" key="4">
    <source>
        <dbReference type="PDB" id="2JMR"/>
    </source>
</evidence>
<evidence type="ECO:0007829" key="5">
    <source>
        <dbReference type="PDB" id="3BWU"/>
    </source>
</evidence>
<evidence type="ECO:0007829" key="6">
    <source>
        <dbReference type="PDB" id="3JWN"/>
    </source>
</evidence>
<evidence type="ECO:0007829" key="7">
    <source>
        <dbReference type="PDB" id="5IQN"/>
    </source>
</evidence>